<reference key="1">
    <citation type="journal article" date="2006" name="Nat. Genet.">
        <title>The multidrug-resistant human pathogen Clostridium difficile has a highly mobile, mosaic genome.</title>
        <authorList>
            <person name="Sebaihia M."/>
            <person name="Wren B.W."/>
            <person name="Mullany P."/>
            <person name="Fairweather N.F."/>
            <person name="Minton N."/>
            <person name="Stabler R."/>
            <person name="Thomson N.R."/>
            <person name="Roberts A.P."/>
            <person name="Cerdeno-Tarraga A.M."/>
            <person name="Wang H."/>
            <person name="Holden M.T.G."/>
            <person name="Wright A."/>
            <person name="Churcher C."/>
            <person name="Quail M.A."/>
            <person name="Baker S."/>
            <person name="Bason N."/>
            <person name="Brooks K."/>
            <person name="Chillingworth T."/>
            <person name="Cronin A."/>
            <person name="Davis P."/>
            <person name="Dowd L."/>
            <person name="Fraser A."/>
            <person name="Feltwell T."/>
            <person name="Hance Z."/>
            <person name="Holroyd S."/>
            <person name="Jagels K."/>
            <person name="Moule S."/>
            <person name="Mungall K."/>
            <person name="Price C."/>
            <person name="Rabbinowitsch E."/>
            <person name="Sharp S."/>
            <person name="Simmonds M."/>
            <person name="Stevens K."/>
            <person name="Unwin L."/>
            <person name="Whithead S."/>
            <person name="Dupuy B."/>
            <person name="Dougan G."/>
            <person name="Barrell B."/>
            <person name="Parkhill J."/>
        </authorList>
    </citation>
    <scope>NUCLEOTIDE SEQUENCE [LARGE SCALE GENOMIC DNA]</scope>
    <source>
        <strain>630</strain>
    </source>
</reference>
<name>RUVB_CLOD6</name>
<feature type="chain" id="PRO_0000322789" description="Holliday junction branch migration complex subunit RuvB">
    <location>
        <begin position="1"/>
        <end position="339"/>
    </location>
</feature>
<feature type="region of interest" description="Large ATPase domain (RuvB-L)" evidence="1">
    <location>
        <begin position="1"/>
        <end position="187"/>
    </location>
</feature>
<feature type="region of interest" description="Small ATPAse domain (RuvB-S)" evidence="1">
    <location>
        <begin position="188"/>
        <end position="258"/>
    </location>
</feature>
<feature type="region of interest" description="Head domain (RuvB-H)" evidence="1">
    <location>
        <begin position="261"/>
        <end position="339"/>
    </location>
</feature>
<feature type="binding site" evidence="1">
    <location>
        <position position="26"/>
    </location>
    <ligand>
        <name>ATP</name>
        <dbReference type="ChEBI" id="CHEBI:30616"/>
    </ligand>
</feature>
<feature type="binding site" evidence="1">
    <location>
        <position position="27"/>
    </location>
    <ligand>
        <name>ATP</name>
        <dbReference type="ChEBI" id="CHEBI:30616"/>
    </ligand>
</feature>
<feature type="binding site" evidence="1">
    <location>
        <position position="68"/>
    </location>
    <ligand>
        <name>ATP</name>
        <dbReference type="ChEBI" id="CHEBI:30616"/>
    </ligand>
</feature>
<feature type="binding site" evidence="1">
    <location>
        <position position="71"/>
    </location>
    <ligand>
        <name>ATP</name>
        <dbReference type="ChEBI" id="CHEBI:30616"/>
    </ligand>
</feature>
<feature type="binding site" evidence="1">
    <location>
        <position position="72"/>
    </location>
    <ligand>
        <name>ATP</name>
        <dbReference type="ChEBI" id="CHEBI:30616"/>
    </ligand>
</feature>
<feature type="binding site" evidence="1">
    <location>
        <position position="72"/>
    </location>
    <ligand>
        <name>Mg(2+)</name>
        <dbReference type="ChEBI" id="CHEBI:18420"/>
    </ligand>
</feature>
<feature type="binding site" evidence="1">
    <location>
        <position position="73"/>
    </location>
    <ligand>
        <name>ATP</name>
        <dbReference type="ChEBI" id="CHEBI:30616"/>
    </ligand>
</feature>
<feature type="binding site" evidence="1">
    <location>
        <begin position="134"/>
        <end position="136"/>
    </location>
    <ligand>
        <name>ATP</name>
        <dbReference type="ChEBI" id="CHEBI:30616"/>
    </ligand>
</feature>
<feature type="binding site" evidence="1">
    <location>
        <position position="177"/>
    </location>
    <ligand>
        <name>ATP</name>
        <dbReference type="ChEBI" id="CHEBI:30616"/>
    </ligand>
</feature>
<feature type="binding site" evidence="1">
    <location>
        <position position="187"/>
    </location>
    <ligand>
        <name>ATP</name>
        <dbReference type="ChEBI" id="CHEBI:30616"/>
    </ligand>
</feature>
<feature type="binding site" evidence="1">
    <location>
        <position position="224"/>
    </location>
    <ligand>
        <name>ATP</name>
        <dbReference type="ChEBI" id="CHEBI:30616"/>
    </ligand>
</feature>
<feature type="binding site" evidence="1">
    <location>
        <position position="297"/>
    </location>
    <ligand>
        <name>DNA</name>
        <dbReference type="ChEBI" id="CHEBI:16991"/>
    </ligand>
</feature>
<feature type="binding site" evidence="1">
    <location>
        <position position="316"/>
    </location>
    <ligand>
        <name>DNA</name>
        <dbReference type="ChEBI" id="CHEBI:16991"/>
    </ligand>
</feature>
<feature type="binding site" evidence="1">
    <location>
        <position position="321"/>
    </location>
    <ligand>
        <name>DNA</name>
        <dbReference type="ChEBI" id="CHEBI:16991"/>
    </ligand>
</feature>
<keyword id="KW-0067">ATP-binding</keyword>
<keyword id="KW-0963">Cytoplasm</keyword>
<keyword id="KW-0227">DNA damage</keyword>
<keyword id="KW-0233">DNA recombination</keyword>
<keyword id="KW-0234">DNA repair</keyword>
<keyword id="KW-0238">DNA-binding</keyword>
<keyword id="KW-0378">Hydrolase</keyword>
<keyword id="KW-0547">Nucleotide-binding</keyword>
<keyword id="KW-1185">Reference proteome</keyword>
<dbReference type="EC" id="3.6.4.-" evidence="1"/>
<dbReference type="EMBL" id="AM180355">
    <property type="protein sequence ID" value="CAJ69693.1"/>
    <property type="molecule type" value="Genomic_DNA"/>
</dbReference>
<dbReference type="RefSeq" id="WP_003426579.1">
    <property type="nucleotide sequence ID" value="NZ_JAUPES010000033.1"/>
</dbReference>
<dbReference type="RefSeq" id="YP_001089318.1">
    <property type="nucleotide sequence ID" value="NC_009089.1"/>
</dbReference>
<dbReference type="SMR" id="Q183N8"/>
<dbReference type="STRING" id="272563.CD630_28050"/>
<dbReference type="EnsemblBacteria" id="CAJ69693">
    <property type="protein sequence ID" value="CAJ69693"/>
    <property type="gene ID" value="CD630_28050"/>
</dbReference>
<dbReference type="GeneID" id="66355213"/>
<dbReference type="KEGG" id="cdf:CD630_28050"/>
<dbReference type="KEGG" id="pdc:CDIF630_03070"/>
<dbReference type="PATRIC" id="fig|272563.120.peg.2955"/>
<dbReference type="eggNOG" id="COG2255">
    <property type="taxonomic scope" value="Bacteria"/>
</dbReference>
<dbReference type="OrthoDB" id="9804478at2"/>
<dbReference type="PhylomeDB" id="Q183N8"/>
<dbReference type="BioCyc" id="PDIF272563:G12WB-2965-MONOMER"/>
<dbReference type="Proteomes" id="UP000001978">
    <property type="component" value="Chromosome"/>
</dbReference>
<dbReference type="GO" id="GO:0005737">
    <property type="term" value="C:cytoplasm"/>
    <property type="evidence" value="ECO:0007669"/>
    <property type="project" value="UniProtKB-SubCell"/>
</dbReference>
<dbReference type="GO" id="GO:0048476">
    <property type="term" value="C:Holliday junction resolvase complex"/>
    <property type="evidence" value="ECO:0007669"/>
    <property type="project" value="UniProtKB-UniRule"/>
</dbReference>
<dbReference type="GO" id="GO:0005524">
    <property type="term" value="F:ATP binding"/>
    <property type="evidence" value="ECO:0007669"/>
    <property type="project" value="UniProtKB-UniRule"/>
</dbReference>
<dbReference type="GO" id="GO:0016887">
    <property type="term" value="F:ATP hydrolysis activity"/>
    <property type="evidence" value="ECO:0007669"/>
    <property type="project" value="InterPro"/>
</dbReference>
<dbReference type="GO" id="GO:0000400">
    <property type="term" value="F:four-way junction DNA binding"/>
    <property type="evidence" value="ECO:0007669"/>
    <property type="project" value="UniProtKB-UniRule"/>
</dbReference>
<dbReference type="GO" id="GO:0009378">
    <property type="term" value="F:four-way junction helicase activity"/>
    <property type="evidence" value="ECO:0007669"/>
    <property type="project" value="InterPro"/>
</dbReference>
<dbReference type="GO" id="GO:0006310">
    <property type="term" value="P:DNA recombination"/>
    <property type="evidence" value="ECO:0007669"/>
    <property type="project" value="UniProtKB-UniRule"/>
</dbReference>
<dbReference type="GO" id="GO:0006281">
    <property type="term" value="P:DNA repair"/>
    <property type="evidence" value="ECO:0007669"/>
    <property type="project" value="UniProtKB-UniRule"/>
</dbReference>
<dbReference type="CDD" id="cd00009">
    <property type="entry name" value="AAA"/>
    <property type="match status" value="1"/>
</dbReference>
<dbReference type="FunFam" id="3.40.50.300:FF:000073">
    <property type="entry name" value="Holliday junction ATP-dependent DNA helicase RuvB"/>
    <property type="match status" value="1"/>
</dbReference>
<dbReference type="Gene3D" id="1.10.8.60">
    <property type="match status" value="1"/>
</dbReference>
<dbReference type="Gene3D" id="3.40.50.300">
    <property type="entry name" value="P-loop containing nucleotide triphosphate hydrolases"/>
    <property type="match status" value="1"/>
</dbReference>
<dbReference type="Gene3D" id="1.10.10.10">
    <property type="entry name" value="Winged helix-like DNA-binding domain superfamily/Winged helix DNA-binding domain"/>
    <property type="match status" value="1"/>
</dbReference>
<dbReference type="HAMAP" id="MF_00016">
    <property type="entry name" value="DNA_HJ_migration_RuvB"/>
    <property type="match status" value="1"/>
</dbReference>
<dbReference type="InterPro" id="IPR003593">
    <property type="entry name" value="AAA+_ATPase"/>
</dbReference>
<dbReference type="InterPro" id="IPR041445">
    <property type="entry name" value="AAA_lid_4"/>
</dbReference>
<dbReference type="InterPro" id="IPR004605">
    <property type="entry name" value="DNA_helicase_Holl-junc_RuvB"/>
</dbReference>
<dbReference type="InterPro" id="IPR027417">
    <property type="entry name" value="P-loop_NTPase"/>
</dbReference>
<dbReference type="InterPro" id="IPR008824">
    <property type="entry name" value="RuvB-like_N"/>
</dbReference>
<dbReference type="InterPro" id="IPR008823">
    <property type="entry name" value="RuvB_C"/>
</dbReference>
<dbReference type="InterPro" id="IPR036388">
    <property type="entry name" value="WH-like_DNA-bd_sf"/>
</dbReference>
<dbReference type="InterPro" id="IPR036390">
    <property type="entry name" value="WH_DNA-bd_sf"/>
</dbReference>
<dbReference type="NCBIfam" id="NF000868">
    <property type="entry name" value="PRK00080.1"/>
    <property type="match status" value="1"/>
</dbReference>
<dbReference type="NCBIfam" id="TIGR00635">
    <property type="entry name" value="ruvB"/>
    <property type="match status" value="1"/>
</dbReference>
<dbReference type="PANTHER" id="PTHR42848">
    <property type="match status" value="1"/>
</dbReference>
<dbReference type="PANTHER" id="PTHR42848:SF1">
    <property type="entry name" value="HOLLIDAY JUNCTION BRANCH MIGRATION COMPLEX SUBUNIT RUVB"/>
    <property type="match status" value="1"/>
</dbReference>
<dbReference type="Pfam" id="PF17864">
    <property type="entry name" value="AAA_lid_4"/>
    <property type="match status" value="1"/>
</dbReference>
<dbReference type="Pfam" id="PF05491">
    <property type="entry name" value="RuvB_C"/>
    <property type="match status" value="1"/>
</dbReference>
<dbReference type="Pfam" id="PF05496">
    <property type="entry name" value="RuvB_N"/>
    <property type="match status" value="1"/>
</dbReference>
<dbReference type="SMART" id="SM00382">
    <property type="entry name" value="AAA"/>
    <property type="match status" value="1"/>
</dbReference>
<dbReference type="SUPFAM" id="SSF52540">
    <property type="entry name" value="P-loop containing nucleoside triphosphate hydrolases"/>
    <property type="match status" value="1"/>
</dbReference>
<dbReference type="SUPFAM" id="SSF46785">
    <property type="entry name" value="Winged helix' DNA-binding domain"/>
    <property type="match status" value="1"/>
</dbReference>
<sequence>MQGFEDENRIITSTMKMEDIDIENSLRPKTLEDYLGQEKSKEQLSIFIEAAKSRNEQLDHVLLYGPPGLGKTTLASIIANEMGVNLRITSGPAIERAGDLAAILTNLNENDVLFIDEIHRINRSVEEVLYPAMEDFCLDIIIGKGPSARSIRLDLPKFTLIGATTRAGMLTNPLRDRFGVICKLDYYTVDELSKIVLRSSSILDAEIQSNGALELAKRSRGTPRIANRLLKRVRDFAQVRADGKITDKVAKDALELLGVDSLGLDFVDEKLLMTIIEKFRGGPVGLDTLAASIGEDRNTIEDVYEPYLLQLGFINRGPRGRVAMPLAYEHLKIPYPNEK</sequence>
<protein>
    <recommendedName>
        <fullName evidence="1">Holliday junction branch migration complex subunit RuvB</fullName>
        <ecNumber evidence="1">3.6.4.-</ecNumber>
    </recommendedName>
</protein>
<accession>Q183N8</accession>
<comment type="function">
    <text evidence="1">The RuvA-RuvB-RuvC complex processes Holliday junction (HJ) DNA during genetic recombination and DNA repair, while the RuvA-RuvB complex plays an important role in the rescue of blocked DNA replication forks via replication fork reversal (RFR). RuvA specifically binds to HJ cruciform DNA, conferring on it an open structure. The RuvB hexamer acts as an ATP-dependent pump, pulling dsDNA into and through the RuvAB complex. RuvB forms 2 homohexamers on either side of HJ DNA bound by 1 or 2 RuvA tetramers; 4 subunits per hexamer contact DNA at a time. Coordinated motions by a converter formed by DNA-disengaged RuvB subunits stimulates ATP hydrolysis and nucleotide exchange. Immobilization of the converter enables RuvB to convert the ATP-contained energy into a lever motion, pulling 2 nucleotides of DNA out of the RuvA tetramer per ATP hydrolyzed, thus driving DNA branch migration. The RuvB motors rotate together with the DNA substrate, which together with the progressing nucleotide cycle form the mechanistic basis for DNA recombination by continuous HJ branch migration. Branch migration allows RuvC to scan DNA until it finds its consensus sequence, where it cleaves and resolves cruciform DNA.</text>
</comment>
<comment type="catalytic activity">
    <reaction evidence="1">
        <text>ATP + H2O = ADP + phosphate + H(+)</text>
        <dbReference type="Rhea" id="RHEA:13065"/>
        <dbReference type="ChEBI" id="CHEBI:15377"/>
        <dbReference type="ChEBI" id="CHEBI:15378"/>
        <dbReference type="ChEBI" id="CHEBI:30616"/>
        <dbReference type="ChEBI" id="CHEBI:43474"/>
        <dbReference type="ChEBI" id="CHEBI:456216"/>
    </reaction>
</comment>
<comment type="subunit">
    <text evidence="1">Homohexamer. Forms an RuvA(8)-RuvB(12)-Holliday junction (HJ) complex. HJ DNA is sandwiched between 2 RuvA tetramers; dsDNA enters through RuvA and exits via RuvB. An RuvB hexamer assembles on each DNA strand where it exits the tetramer. Each RuvB hexamer is contacted by two RuvA subunits (via domain III) on 2 adjacent RuvB subunits; this complex drives branch migration. In the full resolvosome a probable DNA-RuvA(4)-RuvB(12)-RuvC(2) complex forms which resolves the HJ.</text>
</comment>
<comment type="subcellular location">
    <subcellularLocation>
        <location evidence="1">Cytoplasm</location>
    </subcellularLocation>
</comment>
<comment type="domain">
    <text evidence="1">Has 3 domains, the large (RuvB-L) and small ATPase (RuvB-S) domains and the C-terminal head (RuvB-H) domain. The head domain binds DNA, while the ATPase domains jointly bind ATP, ADP or are empty depending on the state of the subunit in the translocation cycle. During a single DNA translocation step the structure of each domain remains the same, but their relative positions change.</text>
</comment>
<comment type="similarity">
    <text evidence="1">Belongs to the RuvB family.</text>
</comment>
<organism>
    <name type="scientific">Clostridioides difficile (strain 630)</name>
    <name type="common">Peptoclostridium difficile</name>
    <dbReference type="NCBI Taxonomy" id="272563"/>
    <lineage>
        <taxon>Bacteria</taxon>
        <taxon>Bacillati</taxon>
        <taxon>Bacillota</taxon>
        <taxon>Clostridia</taxon>
        <taxon>Peptostreptococcales</taxon>
        <taxon>Peptostreptococcaceae</taxon>
        <taxon>Clostridioides</taxon>
    </lineage>
</organism>
<gene>
    <name evidence="1" type="primary">ruvB</name>
    <name type="ordered locus">CD630_28050</name>
</gene>
<proteinExistence type="inferred from homology"/>
<evidence type="ECO:0000255" key="1">
    <source>
        <dbReference type="HAMAP-Rule" id="MF_00016"/>
    </source>
</evidence>